<comment type="function">
    <text>Could be involved in facilitating the biotrophic relationship between the plant and the rust fungus.</text>
</comment>
<comment type="catalytic activity">
    <reaction>
        <text>an aldehyde + NAD(+) + H2O = a carboxylate + NADH + 2 H(+)</text>
        <dbReference type="Rhea" id="RHEA:16185"/>
        <dbReference type="ChEBI" id="CHEBI:15377"/>
        <dbReference type="ChEBI" id="CHEBI:15378"/>
        <dbReference type="ChEBI" id="CHEBI:17478"/>
        <dbReference type="ChEBI" id="CHEBI:29067"/>
        <dbReference type="ChEBI" id="CHEBI:57540"/>
        <dbReference type="ChEBI" id="CHEBI:57945"/>
        <dbReference type="EC" id="1.2.1.3"/>
    </reaction>
</comment>
<comment type="tissue specificity">
    <text>In uninfected plants, highest levels found in stems. In plants infected with the flax rust, highest levels in leaves. Higher levels of expression in infected leaves than uninfected stems.</text>
</comment>
<comment type="induction">
    <text evidence="3">By flax rust susceptible infection but not by resistant infection. Levels 10-fold higher in infected plants than uninfected plants.</text>
</comment>
<comment type="similarity">
    <text evidence="4">Belongs to the aldehyde dehydrogenase family.</text>
</comment>
<evidence type="ECO:0000250" key="1"/>
<evidence type="ECO:0000255" key="2">
    <source>
        <dbReference type="PROSITE-ProRule" id="PRU10008"/>
    </source>
</evidence>
<evidence type="ECO:0000269" key="3">
    <source>
    </source>
</evidence>
<evidence type="ECO:0000305" key="4"/>
<accession>Q40255</accession>
<reference key="1">
    <citation type="journal article" date="1995" name="Plant J.">
        <title>Isolation of a flax (Linum usitatissimum) gene induced during susceptible infection by flax rust (Melampsora lini).</title>
        <authorList>
            <person name="Roberts J.K."/>
            <person name="Pryor A."/>
        </authorList>
    </citation>
    <scope>NUCLEOTIDE SEQUENCE [MRNA]</scope>
    <scope>INDUCTION</scope>
    <source>
        <strain>cv. Hoshangabad</strain>
        <tissue>Seedling leaf</tissue>
    </source>
</reference>
<gene>
    <name type="primary">FIS1</name>
</gene>
<proteinExistence type="evidence at transcript level"/>
<feature type="chain" id="PRO_0000056433" description="Probable aldehyde dehydrogenase">
    <location>
        <begin position="1"/>
        <end position="551"/>
    </location>
</feature>
<feature type="active site" description="Proton acceptor" evidence="2">
    <location>
        <position position="297"/>
    </location>
</feature>
<feature type="active site" description="Nucleophile" evidence="2">
    <location>
        <position position="332"/>
    </location>
</feature>
<feature type="binding site" evidence="1">
    <location>
        <begin position="278"/>
        <end position="283"/>
    </location>
    <ligand>
        <name>NAD(+)</name>
        <dbReference type="ChEBI" id="CHEBI:57540"/>
    </ligand>
</feature>
<feature type="site" description="Transition state stabilizer" evidence="1">
    <location>
        <position position="203"/>
    </location>
</feature>
<organism>
    <name type="scientific">Linum usitatissimum</name>
    <name type="common">Flax</name>
    <name type="synonym">Linum humile</name>
    <dbReference type="NCBI Taxonomy" id="4006"/>
    <lineage>
        <taxon>Eukaryota</taxon>
        <taxon>Viridiplantae</taxon>
        <taxon>Streptophyta</taxon>
        <taxon>Embryophyta</taxon>
        <taxon>Tracheophyta</taxon>
        <taxon>Spermatophyta</taxon>
        <taxon>Magnoliopsida</taxon>
        <taxon>eudicotyledons</taxon>
        <taxon>Gunneridae</taxon>
        <taxon>Pentapetalae</taxon>
        <taxon>rosids</taxon>
        <taxon>fabids</taxon>
        <taxon>Malpighiales</taxon>
        <taxon>Linaceae</taxon>
        <taxon>Linum</taxon>
    </lineage>
</organism>
<sequence length="551" mass="61032">MYRPLVARLLRDSVATRKGSSHFARRFSHSLPFATVDAEELSGAKPAEVLNLVQGNWGGSSSWHTVVDPLNGEPFIKVAEVDETEIKPFVESLSKCPKHGLHNPFKSPERYLLYGDISTKAGHMLSIPKVSEFFARLIQRVAPKSYHQALGEVQVTQKFFENFTGDQVRFLARSFGVPGNHLGQQSNGFRWPFGPVAIITPFNFPLEIPVLQLMGALYMGNKPLLKVDSKVSIVMEQMMRLLHYCGLPVGDADFVNSDGKAMNKILLEANPRMTLFTGSSRVAEKLALDLKGRIKLEDAGFDWKILGPDVNEADYVAWVCDQDAYACSGQKCSAQSILFMHENWAATPLISRLKELAERRKLEDLTVGPVLTVTTEAMLDHLNKLLQIPGAKLLFGGKPLENHTIPSIYGAVKPTAVYVPLEEILKVSNYELVTKEIFGPFQVVTEYKNSQLPMVLEALERMHAHLTAAVVSNDQLFLQEVIGNTVNGTTYAGLRARTTGAPQNHWFGPAGDPRGAGIGTPEAIKLVWSCHREIIYDIGPVSHHWEIPPST</sequence>
<name>ALDH_LINUS</name>
<protein>
    <recommendedName>
        <fullName>Probable aldehyde dehydrogenase</fullName>
        <ecNumber>1.2.1.3</ecNumber>
    </recommendedName>
    <alternativeName>
        <fullName>Flax-inducible sequence 1</fullName>
    </alternativeName>
</protein>
<keyword id="KW-0520">NAD</keyword>
<keyword id="KW-0560">Oxidoreductase</keyword>
<dbReference type="EC" id="1.2.1.3"/>
<dbReference type="EMBL" id="X86733">
    <property type="protein sequence ID" value="CAA60412.1"/>
    <property type="molecule type" value="mRNA"/>
</dbReference>
<dbReference type="SMR" id="Q40255"/>
<dbReference type="GO" id="GO:0005739">
    <property type="term" value="C:mitochondrion"/>
    <property type="evidence" value="ECO:0007669"/>
    <property type="project" value="TreeGrafter"/>
</dbReference>
<dbReference type="GO" id="GO:0003842">
    <property type="term" value="F:1-pyrroline-5-carboxylate dehydrogenase activity"/>
    <property type="evidence" value="ECO:0007669"/>
    <property type="project" value="TreeGrafter"/>
</dbReference>
<dbReference type="GO" id="GO:0004029">
    <property type="term" value="F:aldehyde dehydrogenase (NAD+) activity"/>
    <property type="evidence" value="ECO:0007669"/>
    <property type="project" value="UniProtKB-EC"/>
</dbReference>
<dbReference type="GO" id="GO:0010133">
    <property type="term" value="P:proline catabolic process to glutamate"/>
    <property type="evidence" value="ECO:0007669"/>
    <property type="project" value="TreeGrafter"/>
</dbReference>
<dbReference type="CDD" id="cd07126">
    <property type="entry name" value="ALDH_F12_P5CDH"/>
    <property type="match status" value="1"/>
</dbReference>
<dbReference type="FunFam" id="3.40.309.10:FF:000023">
    <property type="entry name" value="Aldehyde dehydrogenase 12"/>
    <property type="match status" value="1"/>
</dbReference>
<dbReference type="FunFam" id="3.40.605.10:FF:000019">
    <property type="entry name" value="probable aldehyde dehydrogenase"/>
    <property type="match status" value="1"/>
</dbReference>
<dbReference type="Gene3D" id="3.40.605.10">
    <property type="entry name" value="Aldehyde Dehydrogenase, Chain A, domain 1"/>
    <property type="match status" value="1"/>
</dbReference>
<dbReference type="Gene3D" id="3.40.309.10">
    <property type="entry name" value="Aldehyde Dehydrogenase, Chain A, domain 2"/>
    <property type="match status" value="1"/>
</dbReference>
<dbReference type="InterPro" id="IPR016161">
    <property type="entry name" value="Ald_DH/histidinol_DH"/>
</dbReference>
<dbReference type="InterPro" id="IPR016163">
    <property type="entry name" value="Ald_DH_C"/>
</dbReference>
<dbReference type="InterPro" id="IPR016160">
    <property type="entry name" value="Ald_DH_CS_CYS"/>
</dbReference>
<dbReference type="InterPro" id="IPR016162">
    <property type="entry name" value="Ald_DH_N"/>
</dbReference>
<dbReference type="InterPro" id="IPR015590">
    <property type="entry name" value="Aldehyde_DH_dom"/>
</dbReference>
<dbReference type="InterPro" id="IPR044638">
    <property type="entry name" value="ALDH7A1-like"/>
</dbReference>
<dbReference type="PANTHER" id="PTHR43521">
    <property type="entry name" value="ALPHA-AMINOADIPIC SEMIALDEHYDE DEHYDROGENASE"/>
    <property type="match status" value="1"/>
</dbReference>
<dbReference type="PANTHER" id="PTHR43521:SF7">
    <property type="entry name" value="DELTA-1-PYRROLINE-5-CARBOXYLATE DEHYDROGENASE 12A1, MITOCHONDRIAL"/>
    <property type="match status" value="1"/>
</dbReference>
<dbReference type="Pfam" id="PF00171">
    <property type="entry name" value="Aldedh"/>
    <property type="match status" value="1"/>
</dbReference>
<dbReference type="SUPFAM" id="SSF53720">
    <property type="entry name" value="ALDH-like"/>
    <property type="match status" value="1"/>
</dbReference>
<dbReference type="PROSITE" id="PS00070">
    <property type="entry name" value="ALDEHYDE_DEHYDR_CYS"/>
    <property type="match status" value="1"/>
</dbReference>